<feature type="chain" id="PRO_0000096549" description="Protein MPA43">
    <location>
        <begin position="1"/>
        <end position="542"/>
    </location>
</feature>
<feature type="sequence conflict" description="In Ref. 5; CAA63905." evidence="2" ref="5">
    <original>KKSWKFWQ</original>
    <variation>RSHGNLA</variation>
    <location>
        <begin position="46"/>
        <end position="53"/>
    </location>
</feature>
<evidence type="ECO:0000269" key="1">
    <source>
    </source>
</evidence>
<evidence type="ECO:0000305" key="2"/>
<accession>P53583</accession>
<accession>D6W0U4</accession>
<sequence length="542" mass="61667">MNSSLQVGIGIDVGSSSARIGVYNYYNDALLEMAQEPVPYYQDSSKKSWKFWQKSTEIIKALQKCLQKLNIREYEVKSCGVSATCSLAIFERDRTSNMLIPYPNEDNVIFWMDSSAVNECQWLNMQCPQQLLDYLGGKFVPEMGVPKLKYFLDEYSHLRDKHFHIFDLHQYIAYELSRLYEWNIEGLLGRENLNGIGNDGEVSGWSSSFYKNIINLPSNVSIGTTSLVANKHISTTVVRSCIDSYASWFAVASPHLETSLFMIAGTSSCYMYGTTISDTRIPGVWGPFDTILDNRGDFSVYAAGQSCTGKLIEHLFESHPCARKILKDGADIYQVLEQTIRDIEKNNGLSIHILTKDMFFYGDYEGNRTPFADPRIKGSFIGESTDTSMLNLTYKYICILEFLSFQTKLIIDTFQNENSNIHIKELRISGSQAKNERLLSLISLVNNGVAIIKPKENVDMMGIKGAYVLAKSAKEKKQLADVITERDISNDSEKFESLAEYRLGNDSILLRKLLCVKYHIHLDMAKQQKRYHKLVDEVFQHL</sequence>
<reference key="1">
    <citation type="journal article" date="1997" name="Yeast">
        <title>Sequence analysis of the 33 kb long region between ORC5 and SUI1 from the left arm of chromosome XIV from Saccharomyces cerevisiae.</title>
        <authorList>
            <person name="Sen-Gupta M."/>
            <person name="Gueldener U."/>
            <person name="Beinhauer J.D."/>
            <person name="Fiedler T.A."/>
            <person name="Hegemann J.H."/>
        </authorList>
    </citation>
    <scope>NUCLEOTIDE SEQUENCE [GENOMIC DNA]</scope>
    <source>
        <strain>ATCC 96604 / S288c / FY1679</strain>
    </source>
</reference>
<reference key="2">
    <citation type="journal article" date="1997" name="Nature">
        <title>The nucleotide sequence of Saccharomyces cerevisiae chromosome XIV and its evolutionary implications.</title>
        <authorList>
            <person name="Philippsen P."/>
            <person name="Kleine K."/>
            <person name="Poehlmann R."/>
            <person name="Duesterhoeft A."/>
            <person name="Hamberg K."/>
            <person name="Hegemann J.H."/>
            <person name="Obermaier B."/>
            <person name="Urrestarazu L.A."/>
            <person name="Aert R."/>
            <person name="Albermann K."/>
            <person name="Altmann R."/>
            <person name="Andre B."/>
            <person name="Baladron V."/>
            <person name="Ballesta J.P.G."/>
            <person name="Becam A.-M."/>
            <person name="Beinhauer J.D."/>
            <person name="Boskovic J."/>
            <person name="Buitrago M.J."/>
            <person name="Bussereau F."/>
            <person name="Coster F."/>
            <person name="Crouzet M."/>
            <person name="D'Angelo M."/>
            <person name="Dal Pero F."/>
            <person name="De Antoni A."/>
            <person name="del Rey F."/>
            <person name="Doignon F."/>
            <person name="Domdey H."/>
            <person name="Dubois E."/>
            <person name="Fiedler T.A."/>
            <person name="Fleig U."/>
            <person name="Floeth M."/>
            <person name="Fritz C."/>
            <person name="Gaillardin C."/>
            <person name="Garcia-Cantalejo J.M."/>
            <person name="Glansdorff N."/>
            <person name="Goffeau A."/>
            <person name="Gueldener U."/>
            <person name="Herbert C.J."/>
            <person name="Heumann K."/>
            <person name="Heuss-Neitzel D."/>
            <person name="Hilbert H."/>
            <person name="Hinni K."/>
            <person name="Iraqui Houssaini I."/>
            <person name="Jacquet M."/>
            <person name="Jimenez A."/>
            <person name="Jonniaux J.-L."/>
            <person name="Karpfinger-Hartl L."/>
            <person name="Lanfranchi G."/>
            <person name="Lepingle A."/>
            <person name="Levesque H."/>
            <person name="Lyck R."/>
            <person name="Maftahi M."/>
            <person name="Mallet L."/>
            <person name="Maurer C.T.C."/>
            <person name="Messenguy F."/>
            <person name="Mewes H.-W."/>
            <person name="Moestl D."/>
            <person name="Nasr F."/>
            <person name="Nicaud J.-M."/>
            <person name="Niedenthal R.K."/>
            <person name="Pandolfo D."/>
            <person name="Pierard A."/>
            <person name="Piravandi E."/>
            <person name="Planta R.J."/>
            <person name="Pohl T.M."/>
            <person name="Purnelle B."/>
            <person name="Rebischung C."/>
            <person name="Remacha M.A."/>
            <person name="Revuelta J.L."/>
            <person name="Rinke M."/>
            <person name="Saiz J.E."/>
            <person name="Sartorello F."/>
            <person name="Scherens B."/>
            <person name="Sen-Gupta M."/>
            <person name="Soler-Mira A."/>
            <person name="Urbanus J.H.M."/>
            <person name="Valle G."/>
            <person name="Van Dyck L."/>
            <person name="Verhasselt P."/>
            <person name="Vierendeels F."/>
            <person name="Vissers S."/>
            <person name="Voet M."/>
            <person name="Volckaert G."/>
            <person name="Wach A."/>
            <person name="Wambutt R."/>
            <person name="Wedler H."/>
            <person name="Zollner A."/>
            <person name="Hani J."/>
        </authorList>
    </citation>
    <scope>NUCLEOTIDE SEQUENCE [LARGE SCALE GENOMIC DNA]</scope>
    <source>
        <strain>ATCC 204508 / S288c</strain>
    </source>
</reference>
<reference key="3">
    <citation type="journal article" date="2014" name="G3 (Bethesda)">
        <title>The reference genome sequence of Saccharomyces cerevisiae: Then and now.</title>
        <authorList>
            <person name="Engel S.R."/>
            <person name="Dietrich F.S."/>
            <person name="Fisk D.G."/>
            <person name="Binkley G."/>
            <person name="Balakrishnan R."/>
            <person name="Costanzo M.C."/>
            <person name="Dwight S.S."/>
            <person name="Hitz B.C."/>
            <person name="Karra K."/>
            <person name="Nash R.S."/>
            <person name="Weng S."/>
            <person name="Wong E.D."/>
            <person name="Lloyd P."/>
            <person name="Skrzypek M.S."/>
            <person name="Miyasato S.R."/>
            <person name="Simison M."/>
            <person name="Cherry J.M."/>
        </authorList>
    </citation>
    <scope>GENOME REANNOTATION</scope>
    <source>
        <strain>ATCC 204508 / S288c</strain>
    </source>
</reference>
<reference key="4">
    <citation type="journal article" date="2007" name="Genome Res.">
        <title>Approaching a complete repository of sequence-verified protein-encoding clones for Saccharomyces cerevisiae.</title>
        <authorList>
            <person name="Hu Y."/>
            <person name="Rolfs A."/>
            <person name="Bhullar B."/>
            <person name="Murthy T.V.S."/>
            <person name="Zhu C."/>
            <person name="Berger M.F."/>
            <person name="Camargo A.A."/>
            <person name="Kelley F."/>
            <person name="McCarron S."/>
            <person name="Jepson D."/>
            <person name="Richardson A."/>
            <person name="Raphael J."/>
            <person name="Moreira D."/>
            <person name="Taycher E."/>
            <person name="Zuo D."/>
            <person name="Mohr S."/>
            <person name="Kane M.F."/>
            <person name="Williamson J."/>
            <person name="Simpson A.J.G."/>
            <person name="Bulyk M.L."/>
            <person name="Harlow E."/>
            <person name="Marsischky G."/>
            <person name="Kolodner R.D."/>
            <person name="LaBaer J."/>
        </authorList>
    </citation>
    <scope>NUCLEOTIDE SEQUENCE [GENOMIC DNA]</scope>
    <source>
        <strain>ATCC 204508 / S288c</strain>
    </source>
</reference>
<reference key="5">
    <citation type="submission" date="1995-12" db="EMBL/GenBank/DDBJ databases">
        <authorList>
            <person name="Boles E."/>
            <person name="Hettmann C."/>
            <person name="Zimmermann F.K."/>
        </authorList>
    </citation>
    <scope>NUCLEOTIDE SEQUENCE [GENOMIC DNA] OF 41-542</scope>
    <source>
        <strain>ENY.WA-1A</strain>
    </source>
</reference>
<reference key="6">
    <citation type="journal article" date="2003" name="Nature">
        <title>Global analysis of protein expression in yeast.</title>
        <authorList>
            <person name="Ghaemmaghami S."/>
            <person name="Huh W.-K."/>
            <person name="Bower K."/>
            <person name="Howson R.W."/>
            <person name="Belle A."/>
            <person name="Dephoure N."/>
            <person name="O'Shea E.K."/>
            <person name="Weissman J.S."/>
        </authorList>
    </citation>
    <scope>LEVEL OF PROTEIN EXPRESSION [LARGE SCALE ANALYSIS]</scope>
</reference>
<organism>
    <name type="scientific">Saccharomyces cerevisiae (strain ATCC 204508 / S288c)</name>
    <name type="common">Baker's yeast</name>
    <dbReference type="NCBI Taxonomy" id="559292"/>
    <lineage>
        <taxon>Eukaryota</taxon>
        <taxon>Fungi</taxon>
        <taxon>Dikarya</taxon>
        <taxon>Ascomycota</taxon>
        <taxon>Saccharomycotina</taxon>
        <taxon>Saccharomycetes</taxon>
        <taxon>Saccharomycetales</taxon>
        <taxon>Saccharomycetaceae</taxon>
        <taxon>Saccharomyces</taxon>
    </lineage>
</organism>
<proteinExistence type="evidence at protein level"/>
<name>MPA43_YEAST</name>
<keyword id="KW-1185">Reference proteome</keyword>
<gene>
    <name type="primary">MPA43</name>
    <name type="ordered locus">YNL249C</name>
    <name type="ORF">N0875</name>
</gene>
<dbReference type="EMBL" id="X96722">
    <property type="protein sequence ID" value="CAA65495.1"/>
    <property type="molecule type" value="Genomic_DNA"/>
</dbReference>
<dbReference type="EMBL" id="Z71525">
    <property type="protein sequence ID" value="CAA96156.1"/>
    <property type="molecule type" value="Genomic_DNA"/>
</dbReference>
<dbReference type="EMBL" id="AY723861">
    <property type="protein sequence ID" value="AAU09778.1"/>
    <property type="molecule type" value="Genomic_DNA"/>
</dbReference>
<dbReference type="EMBL" id="X94214">
    <property type="protein sequence ID" value="CAA63905.1"/>
    <property type="molecule type" value="Genomic_DNA"/>
</dbReference>
<dbReference type="EMBL" id="BK006947">
    <property type="protein sequence ID" value="DAA10310.1"/>
    <property type="molecule type" value="Genomic_DNA"/>
</dbReference>
<dbReference type="PIR" id="S63222">
    <property type="entry name" value="S63222"/>
</dbReference>
<dbReference type="RefSeq" id="NP_014150.1">
    <property type="nucleotide sequence ID" value="NM_001183087.1"/>
</dbReference>
<dbReference type="SMR" id="P53583"/>
<dbReference type="BioGRID" id="35590">
    <property type="interactions" value="45"/>
</dbReference>
<dbReference type="FunCoup" id="P53583">
    <property type="interactions" value="37"/>
</dbReference>
<dbReference type="IntAct" id="P53583">
    <property type="interactions" value="25"/>
</dbReference>
<dbReference type="STRING" id="4932.YNL249C"/>
<dbReference type="iPTMnet" id="P53583"/>
<dbReference type="PaxDb" id="4932-YNL249C"/>
<dbReference type="PeptideAtlas" id="P53583"/>
<dbReference type="EnsemblFungi" id="YNL249C_mRNA">
    <property type="protein sequence ID" value="YNL249C"/>
    <property type="gene ID" value="YNL249C"/>
</dbReference>
<dbReference type="GeneID" id="855472"/>
<dbReference type="KEGG" id="sce:YNL249C"/>
<dbReference type="AGR" id="SGD:S000005193"/>
<dbReference type="SGD" id="S000005193">
    <property type="gene designation" value="MPA43"/>
</dbReference>
<dbReference type="VEuPathDB" id="FungiDB:YNL249C"/>
<dbReference type="eggNOG" id="KOG2517">
    <property type="taxonomic scope" value="Eukaryota"/>
</dbReference>
<dbReference type="GeneTree" id="ENSGT01000000214434"/>
<dbReference type="HOGENOM" id="CLU_009281_10_3_1"/>
<dbReference type="InParanoid" id="P53583"/>
<dbReference type="OMA" id="CIDCYAG"/>
<dbReference type="OrthoDB" id="203824at2759"/>
<dbReference type="BioCyc" id="YEAST:G3O-33246-MONOMER"/>
<dbReference type="BioGRID-ORCS" id="855472">
    <property type="hits" value="1 hit in 10 CRISPR screens"/>
</dbReference>
<dbReference type="PRO" id="PR:P53583"/>
<dbReference type="Proteomes" id="UP000002311">
    <property type="component" value="Chromosome XIV"/>
</dbReference>
<dbReference type="RNAct" id="P53583">
    <property type="molecule type" value="protein"/>
</dbReference>
<dbReference type="GO" id="GO:0005737">
    <property type="term" value="C:cytoplasm"/>
    <property type="evidence" value="ECO:0000318"/>
    <property type="project" value="GO_Central"/>
</dbReference>
<dbReference type="GO" id="GO:0005739">
    <property type="term" value="C:mitochondrion"/>
    <property type="evidence" value="ECO:0007005"/>
    <property type="project" value="SGD"/>
</dbReference>
<dbReference type="GO" id="GO:0019150">
    <property type="term" value="F:D-ribulokinase activity"/>
    <property type="evidence" value="ECO:0000318"/>
    <property type="project" value="GO_Central"/>
</dbReference>
<dbReference type="GO" id="GO:0019321">
    <property type="term" value="P:pentose metabolic process"/>
    <property type="evidence" value="ECO:0000318"/>
    <property type="project" value="GO_Central"/>
</dbReference>
<dbReference type="Gene3D" id="1.20.58.2240">
    <property type="match status" value="1"/>
</dbReference>
<dbReference type="Gene3D" id="3.30.420.40">
    <property type="match status" value="1"/>
</dbReference>
<dbReference type="InterPro" id="IPR043129">
    <property type="entry name" value="ATPase_NBD"/>
</dbReference>
<dbReference type="InterPro" id="IPR018485">
    <property type="entry name" value="FGGY_C"/>
</dbReference>
<dbReference type="InterPro" id="IPR018484">
    <property type="entry name" value="FGGY_N"/>
</dbReference>
<dbReference type="PANTHER" id="PTHR43435:SF1">
    <property type="entry name" value="PROTEIN MPA43"/>
    <property type="match status" value="1"/>
</dbReference>
<dbReference type="PANTHER" id="PTHR43435">
    <property type="entry name" value="RIBULOKINASE"/>
    <property type="match status" value="1"/>
</dbReference>
<dbReference type="Pfam" id="PF02782">
    <property type="entry name" value="FGGY_C"/>
    <property type="match status" value="1"/>
</dbReference>
<dbReference type="Pfam" id="PF00370">
    <property type="entry name" value="FGGY_N"/>
    <property type="match status" value="1"/>
</dbReference>
<dbReference type="SUPFAM" id="SSF53067">
    <property type="entry name" value="Actin-like ATPase domain"/>
    <property type="match status" value="2"/>
</dbReference>
<comment type="miscellaneous">
    <text evidence="1">Present with 1050 molecules/cell in log phase SD medium.</text>
</comment>
<protein>
    <recommendedName>
        <fullName>Protein MPA43</fullName>
    </recommendedName>
</protein>